<keyword id="KW-1185">Reference proteome</keyword>
<accession>P9WLG5</accession>
<accession>L0TAM2</accession>
<accession>Q10526</accession>
<gene>
    <name type="ordered locus">Rv2248</name>
    <name type="ORF">MTCY427.29</name>
</gene>
<protein>
    <recommendedName>
        <fullName>Uncharacterized protein Rv2248</fullName>
    </recommendedName>
</protein>
<dbReference type="EMBL" id="AL123456">
    <property type="protein sequence ID" value="CCP45028.1"/>
    <property type="molecule type" value="Genomic_DNA"/>
</dbReference>
<dbReference type="PIR" id="D70779">
    <property type="entry name" value="D70779"/>
</dbReference>
<dbReference type="RefSeq" id="NP_216764.1">
    <property type="nucleotide sequence ID" value="NC_000962.3"/>
</dbReference>
<dbReference type="RefSeq" id="WP_003411581.1">
    <property type="nucleotide sequence ID" value="NC_000962.3"/>
</dbReference>
<dbReference type="SMR" id="P9WLG5"/>
<dbReference type="STRING" id="83332.Rv2248"/>
<dbReference type="PaxDb" id="83332-Rv2248"/>
<dbReference type="DNASU" id="888603"/>
<dbReference type="GeneID" id="888603"/>
<dbReference type="KEGG" id="mtu:Rv2248"/>
<dbReference type="KEGG" id="mtv:RVBD_2248"/>
<dbReference type="PATRIC" id="fig|83332.111.peg.2502"/>
<dbReference type="TubercuList" id="Rv2248"/>
<dbReference type="eggNOG" id="COG2852">
    <property type="taxonomic scope" value="Bacteria"/>
</dbReference>
<dbReference type="InParanoid" id="P9WLG5"/>
<dbReference type="OrthoDB" id="5143202at2"/>
<dbReference type="PhylomeDB" id="P9WLG5"/>
<dbReference type="Proteomes" id="UP000001584">
    <property type="component" value="Chromosome"/>
</dbReference>
<dbReference type="GO" id="GO:0005886">
    <property type="term" value="C:plasma membrane"/>
    <property type="evidence" value="ECO:0007005"/>
    <property type="project" value="MTBBASE"/>
</dbReference>
<dbReference type="FunFam" id="3.40.960.10:FF:000005">
    <property type="entry name" value="Cullin, a subunit of E3 ubiquitin ligase"/>
    <property type="match status" value="1"/>
</dbReference>
<dbReference type="Gene3D" id="3.40.960.10">
    <property type="entry name" value="VSR Endonuclease"/>
    <property type="match status" value="1"/>
</dbReference>
<dbReference type="InterPro" id="IPR011335">
    <property type="entry name" value="Restrct_endonuc-II-like"/>
</dbReference>
<dbReference type="SUPFAM" id="SSF52980">
    <property type="entry name" value="Restriction endonuclease-like"/>
    <property type="match status" value="1"/>
</dbReference>
<reference key="1">
    <citation type="journal article" date="1998" name="Nature">
        <title>Deciphering the biology of Mycobacterium tuberculosis from the complete genome sequence.</title>
        <authorList>
            <person name="Cole S.T."/>
            <person name="Brosch R."/>
            <person name="Parkhill J."/>
            <person name="Garnier T."/>
            <person name="Churcher C.M."/>
            <person name="Harris D.E."/>
            <person name="Gordon S.V."/>
            <person name="Eiglmeier K."/>
            <person name="Gas S."/>
            <person name="Barry C.E. III"/>
            <person name="Tekaia F."/>
            <person name="Badcock K."/>
            <person name="Basham D."/>
            <person name="Brown D."/>
            <person name="Chillingworth T."/>
            <person name="Connor R."/>
            <person name="Davies R.M."/>
            <person name="Devlin K."/>
            <person name="Feltwell T."/>
            <person name="Gentles S."/>
            <person name="Hamlin N."/>
            <person name="Holroyd S."/>
            <person name="Hornsby T."/>
            <person name="Jagels K."/>
            <person name="Krogh A."/>
            <person name="McLean J."/>
            <person name="Moule S."/>
            <person name="Murphy L.D."/>
            <person name="Oliver S."/>
            <person name="Osborne J."/>
            <person name="Quail M.A."/>
            <person name="Rajandream M.A."/>
            <person name="Rogers J."/>
            <person name="Rutter S."/>
            <person name="Seeger K."/>
            <person name="Skelton S."/>
            <person name="Squares S."/>
            <person name="Squares R."/>
            <person name="Sulston J.E."/>
            <person name="Taylor K."/>
            <person name="Whitehead S."/>
            <person name="Barrell B.G."/>
        </authorList>
    </citation>
    <scope>NUCLEOTIDE SEQUENCE [LARGE SCALE GENOMIC DNA]</scope>
    <source>
        <strain>ATCC 25618 / H37Rv</strain>
    </source>
</reference>
<name>Y2248_MYCTU</name>
<sequence>MTRQQLDVQVKNGGLVRVWYGVYAAQEPDLLGRLAALDVFMGGHAVACLGTAAALYGFDTENTVAIHMLDPGVRMRPTVGLMVHQRVGARLQRVSGRLATAPAWTAVEVARQLRRPRALATLDAALRSMRCARSEIENAVAEQRGRRGIVAARELLPFADGRAESAMESEARLVMIDHGLPLPELQYPIHGHGGEMWRVDFAWPDMRLAAEYESIEWHAGPAEMLRDKTRWAKLQELGWTIVPIVVDDVRREPGRLAARIARHLDRARMAG</sequence>
<proteinExistence type="predicted"/>
<feature type="chain" id="PRO_0000103990" description="Uncharacterized protein Rv2248">
    <location>
        <begin position="1"/>
        <end position="271"/>
    </location>
</feature>
<organism>
    <name type="scientific">Mycobacterium tuberculosis (strain ATCC 25618 / H37Rv)</name>
    <dbReference type="NCBI Taxonomy" id="83332"/>
    <lineage>
        <taxon>Bacteria</taxon>
        <taxon>Bacillati</taxon>
        <taxon>Actinomycetota</taxon>
        <taxon>Actinomycetes</taxon>
        <taxon>Mycobacteriales</taxon>
        <taxon>Mycobacteriaceae</taxon>
        <taxon>Mycobacterium</taxon>
        <taxon>Mycobacterium tuberculosis complex</taxon>
    </lineage>
</organism>